<keyword id="KW-0238">DNA-binding</keyword>
<keyword id="KW-0539">Nucleus</keyword>
<keyword id="KW-1185">Reference proteome</keyword>
<keyword id="KW-0804">Transcription</keyword>
<keyword id="KW-0805">Transcription regulation</keyword>
<name>BH101_ARATH</name>
<sequence length="240" mass="27717">MEYPWLQSQVHSFSPTLHFPSFLHPLDDSKSHNINLHHMSLSHSNNTNSNNNNYQEEDRGAVVLEKKLNHNASERDRRRKLNALYSSLRALLPLSDQKRKLSIPMTVARVVKYIPEQKQELQRLSRRKEELLKRISRKTHQEQLRNKAMMDSIDSSSSQRIAANWLTDTEIAVQIATSKWTSVSDMLLRLEENGLNVISVSSSVSSTARIFYTLHLQMRGDCKVRLEELINGMLLGLRQS</sequence>
<feature type="chain" id="PRO_0000358790" description="Transcription factor bHLH101">
    <location>
        <begin position="1"/>
        <end position="240"/>
    </location>
</feature>
<feature type="domain" description="bHLH" evidence="1">
    <location>
        <begin position="65"/>
        <end position="117"/>
    </location>
</feature>
<reference key="1">
    <citation type="journal article" date="2003" name="Mol. Biol. Evol.">
        <title>The basic helix-loop-helix transcription factor family in plants: a genome-wide study of protein structure and functional diversity.</title>
        <authorList>
            <person name="Heim M.A."/>
            <person name="Jakoby M."/>
            <person name="Werber M."/>
            <person name="Martin C."/>
            <person name="Weisshaar B."/>
            <person name="Bailey P.C."/>
        </authorList>
    </citation>
    <scope>NUCLEOTIDE SEQUENCE [MRNA]</scope>
    <scope>TISSUE SPECIFICITY</scope>
    <scope>GENE FAMILY</scope>
    <scope>NOMENCLATURE</scope>
    <source>
        <strain>cv. Columbia</strain>
        <tissue>Seedling</tissue>
    </source>
</reference>
<reference key="2">
    <citation type="journal article" date="2000" name="Nature">
        <title>Sequence and analysis of chromosome 5 of the plant Arabidopsis thaliana.</title>
        <authorList>
            <person name="Tabata S."/>
            <person name="Kaneko T."/>
            <person name="Nakamura Y."/>
            <person name="Kotani H."/>
            <person name="Kato T."/>
            <person name="Asamizu E."/>
            <person name="Miyajima N."/>
            <person name="Sasamoto S."/>
            <person name="Kimura T."/>
            <person name="Hosouchi T."/>
            <person name="Kawashima K."/>
            <person name="Kohara M."/>
            <person name="Matsumoto M."/>
            <person name="Matsuno A."/>
            <person name="Muraki A."/>
            <person name="Nakayama S."/>
            <person name="Nakazaki N."/>
            <person name="Naruo K."/>
            <person name="Okumura S."/>
            <person name="Shinpo S."/>
            <person name="Takeuchi C."/>
            <person name="Wada T."/>
            <person name="Watanabe A."/>
            <person name="Yamada M."/>
            <person name="Yasuda M."/>
            <person name="Sato S."/>
            <person name="de la Bastide M."/>
            <person name="Huang E."/>
            <person name="Spiegel L."/>
            <person name="Gnoj L."/>
            <person name="O'Shaughnessy A."/>
            <person name="Preston R."/>
            <person name="Habermann K."/>
            <person name="Murray J."/>
            <person name="Johnson D."/>
            <person name="Rohlfing T."/>
            <person name="Nelson J."/>
            <person name="Stoneking T."/>
            <person name="Pepin K."/>
            <person name="Spieth J."/>
            <person name="Sekhon M."/>
            <person name="Armstrong J."/>
            <person name="Becker M."/>
            <person name="Belter E."/>
            <person name="Cordum H."/>
            <person name="Cordes M."/>
            <person name="Courtney L."/>
            <person name="Courtney W."/>
            <person name="Dante M."/>
            <person name="Du H."/>
            <person name="Edwards J."/>
            <person name="Fryman J."/>
            <person name="Haakensen B."/>
            <person name="Lamar E."/>
            <person name="Latreille P."/>
            <person name="Leonard S."/>
            <person name="Meyer R."/>
            <person name="Mulvaney E."/>
            <person name="Ozersky P."/>
            <person name="Riley A."/>
            <person name="Strowmatt C."/>
            <person name="Wagner-McPherson C."/>
            <person name="Wollam A."/>
            <person name="Yoakum M."/>
            <person name="Bell M."/>
            <person name="Dedhia N."/>
            <person name="Parnell L."/>
            <person name="Shah R."/>
            <person name="Rodriguez M."/>
            <person name="Hoon See L."/>
            <person name="Vil D."/>
            <person name="Baker J."/>
            <person name="Kirchoff K."/>
            <person name="Toth K."/>
            <person name="King L."/>
            <person name="Bahret A."/>
            <person name="Miller B."/>
            <person name="Marra M.A."/>
            <person name="Martienssen R."/>
            <person name="McCombie W.R."/>
            <person name="Wilson R.K."/>
            <person name="Murphy G."/>
            <person name="Bancroft I."/>
            <person name="Volckaert G."/>
            <person name="Wambutt R."/>
            <person name="Duesterhoeft A."/>
            <person name="Stiekema W."/>
            <person name="Pohl T."/>
            <person name="Entian K.-D."/>
            <person name="Terryn N."/>
            <person name="Hartley N."/>
            <person name="Bent E."/>
            <person name="Johnson S."/>
            <person name="Langham S.-A."/>
            <person name="McCullagh B."/>
            <person name="Robben J."/>
            <person name="Grymonprez B."/>
            <person name="Zimmermann W."/>
            <person name="Ramsperger U."/>
            <person name="Wedler H."/>
            <person name="Balke K."/>
            <person name="Wedler E."/>
            <person name="Peters S."/>
            <person name="van Staveren M."/>
            <person name="Dirkse W."/>
            <person name="Mooijman P."/>
            <person name="Klein Lankhorst R."/>
            <person name="Weitzenegger T."/>
            <person name="Bothe G."/>
            <person name="Rose M."/>
            <person name="Hauf J."/>
            <person name="Berneiser S."/>
            <person name="Hempel S."/>
            <person name="Feldpausch M."/>
            <person name="Lamberth S."/>
            <person name="Villarroel R."/>
            <person name="Gielen J."/>
            <person name="Ardiles W."/>
            <person name="Bents O."/>
            <person name="Lemcke K."/>
            <person name="Kolesov G."/>
            <person name="Mayer K.F.X."/>
            <person name="Rudd S."/>
            <person name="Schoof H."/>
            <person name="Schueller C."/>
            <person name="Zaccaria P."/>
            <person name="Mewes H.-W."/>
            <person name="Bevan M."/>
            <person name="Fransz P.F."/>
        </authorList>
    </citation>
    <scope>NUCLEOTIDE SEQUENCE [LARGE SCALE GENOMIC DNA]</scope>
    <source>
        <strain>cv. Columbia</strain>
    </source>
</reference>
<reference key="3">
    <citation type="journal article" date="2017" name="Plant J.">
        <title>Araport11: a complete reannotation of the Arabidopsis thaliana reference genome.</title>
        <authorList>
            <person name="Cheng C.Y."/>
            <person name="Krishnakumar V."/>
            <person name="Chan A.P."/>
            <person name="Thibaud-Nissen F."/>
            <person name="Schobel S."/>
            <person name="Town C.D."/>
        </authorList>
    </citation>
    <scope>GENOME REANNOTATION</scope>
    <source>
        <strain>cv. Columbia</strain>
    </source>
</reference>
<reference key="4">
    <citation type="journal article" date="2006" name="Plant Biotechnol. J.">
        <title>Simultaneous high-throughput recombinational cloning of open reading frames in closed and open configurations.</title>
        <authorList>
            <person name="Underwood B.A."/>
            <person name="Vanderhaeghen R."/>
            <person name="Whitford R."/>
            <person name="Town C.D."/>
            <person name="Hilson P."/>
        </authorList>
    </citation>
    <scope>NUCLEOTIDE SEQUENCE [LARGE SCALE MRNA]</scope>
    <source>
        <strain>cv. Columbia</strain>
    </source>
</reference>
<reference key="5">
    <citation type="journal article" date="2003" name="Plant Cell">
        <title>The Arabidopsis basic/helix-loop-helix transcription factor family.</title>
        <authorList>
            <person name="Toledo-Ortiz G."/>
            <person name="Huq E."/>
            <person name="Quail P.H."/>
        </authorList>
    </citation>
    <scope>GENE FAMILY</scope>
</reference>
<reference key="6">
    <citation type="journal article" date="2003" name="Plant Cell">
        <title>Update on the basic helix-loop-helix transcription factor gene family in Arabidopsis thaliana.</title>
        <authorList>
            <person name="Bailey P.C."/>
            <person name="Martin C."/>
            <person name="Toledo-Ortiz G."/>
            <person name="Quail P.H."/>
            <person name="Huq E."/>
            <person name="Heim M.A."/>
            <person name="Jakoby M."/>
            <person name="Werber M."/>
            <person name="Weisshaar B."/>
        </authorList>
    </citation>
    <scope>GENE FAMILY</scope>
    <scope>NOMENCLATURE</scope>
</reference>
<reference key="7">
    <citation type="journal article" date="2007" name="Planta">
        <title>Iron deficiency-mediated stress regulation of four subgroup Ib BHLH genes in Arabidopsis thaliana.</title>
        <authorList>
            <person name="Wang H.-Y."/>
            <person name="Klatte M."/>
            <person name="Jakoby M."/>
            <person name="Baeumlein H."/>
            <person name="Weisshaar B."/>
            <person name="Bauer P."/>
        </authorList>
    </citation>
    <scope>INDUCTION</scope>
</reference>
<organism>
    <name type="scientific">Arabidopsis thaliana</name>
    <name type="common">Mouse-ear cress</name>
    <dbReference type="NCBI Taxonomy" id="3702"/>
    <lineage>
        <taxon>Eukaryota</taxon>
        <taxon>Viridiplantae</taxon>
        <taxon>Streptophyta</taxon>
        <taxon>Embryophyta</taxon>
        <taxon>Tracheophyta</taxon>
        <taxon>Spermatophyta</taxon>
        <taxon>Magnoliopsida</taxon>
        <taxon>eudicotyledons</taxon>
        <taxon>Gunneridae</taxon>
        <taxon>Pentapetalae</taxon>
        <taxon>rosids</taxon>
        <taxon>malvids</taxon>
        <taxon>Brassicales</taxon>
        <taxon>Brassicaceae</taxon>
        <taxon>Camelineae</taxon>
        <taxon>Arabidopsis</taxon>
    </lineage>
</organism>
<comment type="subunit">
    <text evidence="4">Homodimer.</text>
</comment>
<comment type="interaction">
    <interactant intactId="EBI-15195485">
        <id>Q9FYE6</id>
    </interactant>
    <interactant intactId="EBI-1640543">
        <id>Q0V7X4</id>
        <label>FIT</label>
    </interactant>
    <organismsDiffer>false</organismsDiffer>
    <experiments>4</experiments>
</comment>
<comment type="subcellular location">
    <subcellularLocation>
        <location evidence="1">Nucleus</location>
    </subcellularLocation>
</comment>
<comment type="tissue specificity">
    <text evidence="2">Flowers.</text>
</comment>
<comment type="induction">
    <text evidence="3">Up regulated by iron deficiency in roots and leaves, as well as by nickel, high zinc or high copper treatments. Repressed by high iron, low copper and low zinc treatments.</text>
</comment>
<comment type="sequence caution" evidence="4">
    <conflict type="erroneous termination">
        <sequence resource="EMBL-CDS" id="ABK28679"/>
    </conflict>
    <text>Extended C-terminus.</text>
</comment>
<evidence type="ECO:0000255" key="1">
    <source>
        <dbReference type="PROSITE-ProRule" id="PRU00981"/>
    </source>
</evidence>
<evidence type="ECO:0000269" key="2">
    <source>
    </source>
</evidence>
<evidence type="ECO:0000269" key="3">
    <source>
    </source>
</evidence>
<evidence type="ECO:0000305" key="4"/>
<gene>
    <name type="primary">BHLH101</name>
    <name type="synonym">EN10</name>
    <name type="ordered locus">At5g04150</name>
    <name type="ORF">F21E1.70</name>
</gene>
<dbReference type="EMBL" id="AJ519810">
    <property type="protein sequence ID" value="CAD58594.1"/>
    <property type="molecule type" value="mRNA"/>
</dbReference>
<dbReference type="EMBL" id="AL391716">
    <property type="protein sequence ID" value="CAC05497.1"/>
    <property type="molecule type" value="Genomic_DNA"/>
</dbReference>
<dbReference type="EMBL" id="CP002688">
    <property type="status" value="NOT_ANNOTATED_CDS"/>
    <property type="molecule type" value="Genomic_DNA"/>
</dbReference>
<dbReference type="EMBL" id="DQ446915">
    <property type="protein sequence ID" value="ABE66128.1"/>
    <property type="molecule type" value="mRNA"/>
</dbReference>
<dbReference type="EMBL" id="DQ653262">
    <property type="protein sequence ID" value="ABK28679.1"/>
    <property type="status" value="ALT_SEQ"/>
    <property type="molecule type" value="mRNA"/>
</dbReference>
<dbReference type="SMR" id="Q9FYE6"/>
<dbReference type="BioGRID" id="15573">
    <property type="interactions" value="3"/>
</dbReference>
<dbReference type="FunCoup" id="Q9FYE6">
    <property type="interactions" value="29"/>
</dbReference>
<dbReference type="IntAct" id="Q9FYE6">
    <property type="interactions" value="2"/>
</dbReference>
<dbReference type="STRING" id="3702.Q9FYE6"/>
<dbReference type="PaxDb" id="3702-AT5G04150.1"/>
<dbReference type="Araport" id="AT5G04150"/>
<dbReference type="TAIR" id="AT5G04150">
    <property type="gene designation" value="BHLH101"/>
</dbReference>
<dbReference type="eggNOG" id="ENOG502RXMR">
    <property type="taxonomic scope" value="Eukaryota"/>
</dbReference>
<dbReference type="HOGENOM" id="CLU_089779_1_0_1"/>
<dbReference type="InParanoid" id="Q9FYE6"/>
<dbReference type="PhylomeDB" id="Q9FYE6"/>
<dbReference type="PRO" id="PR:Q9FYE6"/>
<dbReference type="Proteomes" id="UP000006548">
    <property type="component" value="Chromosome 5"/>
</dbReference>
<dbReference type="ExpressionAtlas" id="Q9FYE6">
    <property type="expression patterns" value="baseline and differential"/>
</dbReference>
<dbReference type="GO" id="GO:0090575">
    <property type="term" value="C:RNA polymerase II transcription regulator complex"/>
    <property type="evidence" value="ECO:0000318"/>
    <property type="project" value="GO_Central"/>
</dbReference>
<dbReference type="GO" id="GO:0003700">
    <property type="term" value="F:DNA-binding transcription factor activity"/>
    <property type="evidence" value="ECO:0000250"/>
    <property type="project" value="TAIR"/>
</dbReference>
<dbReference type="GO" id="GO:0000981">
    <property type="term" value="F:DNA-binding transcription factor activity, RNA polymerase II-specific"/>
    <property type="evidence" value="ECO:0000318"/>
    <property type="project" value="GO_Central"/>
</dbReference>
<dbReference type="GO" id="GO:0046983">
    <property type="term" value="F:protein dimerization activity"/>
    <property type="evidence" value="ECO:0007669"/>
    <property type="project" value="InterPro"/>
</dbReference>
<dbReference type="GO" id="GO:0000977">
    <property type="term" value="F:RNA polymerase II transcription regulatory region sequence-specific DNA binding"/>
    <property type="evidence" value="ECO:0000318"/>
    <property type="project" value="GO_Central"/>
</dbReference>
<dbReference type="GO" id="GO:0010106">
    <property type="term" value="P:cellular response to iron ion starvation"/>
    <property type="evidence" value="ECO:0000270"/>
    <property type="project" value="TAIR"/>
</dbReference>
<dbReference type="GO" id="GO:0006355">
    <property type="term" value="P:regulation of DNA-templated transcription"/>
    <property type="evidence" value="ECO:0000304"/>
    <property type="project" value="TAIR"/>
</dbReference>
<dbReference type="GO" id="GO:0006357">
    <property type="term" value="P:regulation of transcription by RNA polymerase II"/>
    <property type="evidence" value="ECO:0000318"/>
    <property type="project" value="GO_Central"/>
</dbReference>
<dbReference type="CDD" id="cd18914">
    <property type="entry name" value="bHLH_AtORG2_like"/>
    <property type="match status" value="1"/>
</dbReference>
<dbReference type="FunFam" id="4.10.280.10:FF:000074">
    <property type="entry name" value="Transcription factor ORG2"/>
    <property type="match status" value="1"/>
</dbReference>
<dbReference type="Gene3D" id="4.10.280.10">
    <property type="entry name" value="Helix-loop-helix DNA-binding domain"/>
    <property type="match status" value="1"/>
</dbReference>
<dbReference type="InterPro" id="IPR011598">
    <property type="entry name" value="bHLH_dom"/>
</dbReference>
<dbReference type="InterPro" id="IPR036638">
    <property type="entry name" value="HLH_DNA-bd_sf"/>
</dbReference>
<dbReference type="InterPro" id="IPR015660">
    <property type="entry name" value="MASH1/Ascl1a-like"/>
</dbReference>
<dbReference type="PANTHER" id="PTHR13935">
    <property type="entry name" value="ACHAETE-SCUTE TRANSCRIPTION FACTOR-RELATED"/>
    <property type="match status" value="1"/>
</dbReference>
<dbReference type="PANTHER" id="PTHR13935:SF41">
    <property type="entry name" value="TRANSCRIPTION FACTOR ORG2-RELATED"/>
    <property type="match status" value="1"/>
</dbReference>
<dbReference type="Pfam" id="PF00010">
    <property type="entry name" value="HLH"/>
    <property type="match status" value="1"/>
</dbReference>
<dbReference type="SMART" id="SM00353">
    <property type="entry name" value="HLH"/>
    <property type="match status" value="1"/>
</dbReference>
<dbReference type="SUPFAM" id="SSF47459">
    <property type="entry name" value="HLH, helix-loop-helix DNA-binding domain"/>
    <property type="match status" value="1"/>
</dbReference>
<dbReference type="PROSITE" id="PS50888">
    <property type="entry name" value="BHLH"/>
    <property type="match status" value="1"/>
</dbReference>
<accession>Q9FYE6</accession>
<accession>A0MFD6</accession>
<proteinExistence type="evidence at protein level"/>
<protein>
    <recommendedName>
        <fullName>Transcription factor bHLH101</fullName>
    </recommendedName>
    <alternativeName>
        <fullName>Basic helix-loop-helix protein 101</fullName>
        <shortName>AtbHLH101</shortName>
        <shortName>bHLH 101</shortName>
    </alternativeName>
    <alternativeName>
        <fullName>Transcription factor EN 10</fullName>
    </alternativeName>
    <alternativeName>
        <fullName>bHLH transcription factor bHLH101</fullName>
    </alternativeName>
</protein>